<proteinExistence type="inferred from homology"/>
<dbReference type="EC" id="6.3.3.2"/>
<dbReference type="EMBL" id="L43967">
    <property type="protein sequence ID" value="AAC71465.1"/>
    <property type="molecule type" value="Genomic_DNA"/>
</dbReference>
<dbReference type="PIR" id="A64227">
    <property type="entry name" value="A64227"/>
</dbReference>
<dbReference type="RefSeq" id="WP_009885782.1">
    <property type="nucleotide sequence ID" value="NC_000908.2"/>
</dbReference>
<dbReference type="SMR" id="P47487"/>
<dbReference type="STRING" id="243273.MG_245"/>
<dbReference type="GeneID" id="88282391"/>
<dbReference type="KEGG" id="mge:MG_245"/>
<dbReference type="eggNOG" id="COG0212">
    <property type="taxonomic scope" value="Bacteria"/>
</dbReference>
<dbReference type="HOGENOM" id="CLU_066245_2_2_14"/>
<dbReference type="InParanoid" id="P47487"/>
<dbReference type="OrthoDB" id="9801938at2"/>
<dbReference type="BioCyc" id="MGEN243273:G1GJ2-292-MONOMER"/>
<dbReference type="Proteomes" id="UP000000807">
    <property type="component" value="Chromosome"/>
</dbReference>
<dbReference type="GO" id="GO:0005737">
    <property type="term" value="C:cytoplasm"/>
    <property type="evidence" value="ECO:0000318"/>
    <property type="project" value="GO_Central"/>
</dbReference>
<dbReference type="GO" id="GO:0030272">
    <property type="term" value="F:5-formyltetrahydrofolate cyclo-ligase activity"/>
    <property type="evidence" value="ECO:0000318"/>
    <property type="project" value="GO_Central"/>
</dbReference>
<dbReference type="GO" id="GO:0005524">
    <property type="term" value="F:ATP binding"/>
    <property type="evidence" value="ECO:0007669"/>
    <property type="project" value="UniProtKB-KW"/>
</dbReference>
<dbReference type="GO" id="GO:0046872">
    <property type="term" value="F:metal ion binding"/>
    <property type="evidence" value="ECO:0007669"/>
    <property type="project" value="UniProtKB-KW"/>
</dbReference>
<dbReference type="GO" id="GO:0009396">
    <property type="term" value="P:folic acid-containing compound biosynthetic process"/>
    <property type="evidence" value="ECO:0000318"/>
    <property type="project" value="GO_Central"/>
</dbReference>
<dbReference type="GO" id="GO:0035999">
    <property type="term" value="P:tetrahydrofolate interconversion"/>
    <property type="evidence" value="ECO:0000318"/>
    <property type="project" value="GO_Central"/>
</dbReference>
<dbReference type="Gene3D" id="3.40.50.10420">
    <property type="entry name" value="NagB/RpiA/CoA transferase-like"/>
    <property type="match status" value="1"/>
</dbReference>
<dbReference type="InterPro" id="IPR002698">
    <property type="entry name" value="FTHF_cligase"/>
</dbReference>
<dbReference type="InterPro" id="IPR024185">
    <property type="entry name" value="FTHF_cligase-like_sf"/>
</dbReference>
<dbReference type="InterPro" id="IPR037171">
    <property type="entry name" value="NagB/RpiA_transferase-like"/>
</dbReference>
<dbReference type="PANTHER" id="PTHR23407:SF1">
    <property type="entry name" value="5-FORMYLTETRAHYDROFOLATE CYCLO-LIGASE"/>
    <property type="match status" value="1"/>
</dbReference>
<dbReference type="PANTHER" id="PTHR23407">
    <property type="entry name" value="ATPASE INHIBITOR/5-FORMYLTETRAHYDROFOLATE CYCLO-LIGASE"/>
    <property type="match status" value="1"/>
</dbReference>
<dbReference type="Pfam" id="PF01812">
    <property type="entry name" value="5-FTHF_cyc-lig"/>
    <property type="match status" value="1"/>
</dbReference>
<dbReference type="PIRSF" id="PIRSF006806">
    <property type="entry name" value="FTHF_cligase"/>
    <property type="match status" value="1"/>
</dbReference>
<dbReference type="SUPFAM" id="SSF100950">
    <property type="entry name" value="NagB/RpiA/CoA transferase-like"/>
    <property type="match status" value="1"/>
</dbReference>
<gene>
    <name type="ordered locus">MG245</name>
</gene>
<organism>
    <name type="scientific">Mycoplasma genitalium (strain ATCC 33530 / DSM 19775 / NCTC 10195 / G37)</name>
    <name type="common">Mycoplasmoides genitalium</name>
    <dbReference type="NCBI Taxonomy" id="243273"/>
    <lineage>
        <taxon>Bacteria</taxon>
        <taxon>Bacillati</taxon>
        <taxon>Mycoplasmatota</taxon>
        <taxon>Mycoplasmoidales</taxon>
        <taxon>Mycoplasmoidaceae</taxon>
        <taxon>Mycoplasmoides</taxon>
    </lineage>
</organism>
<evidence type="ECO:0000250" key="1"/>
<evidence type="ECO:0000305" key="2"/>
<comment type="function">
    <text evidence="1">Involved in folate metabolism. Catalyzes the irreversible conversion of 5-formyltetrahydrofolate (5-FTHF) to yield 5,10-methenyltetrahydrofolate (By similarity).</text>
</comment>
<comment type="catalytic activity">
    <reaction>
        <text>(6S)-5-formyl-5,6,7,8-tetrahydrofolate + ATP = (6R)-5,10-methenyltetrahydrofolate + ADP + phosphate</text>
        <dbReference type="Rhea" id="RHEA:10488"/>
        <dbReference type="ChEBI" id="CHEBI:30616"/>
        <dbReference type="ChEBI" id="CHEBI:43474"/>
        <dbReference type="ChEBI" id="CHEBI:57455"/>
        <dbReference type="ChEBI" id="CHEBI:57457"/>
        <dbReference type="ChEBI" id="CHEBI:456216"/>
        <dbReference type="EC" id="6.3.3.2"/>
    </reaction>
</comment>
<comment type="cofactor">
    <cofactor evidence="1">
        <name>Mg(2+)</name>
        <dbReference type="ChEBI" id="CHEBI:18420"/>
    </cofactor>
</comment>
<comment type="subunit">
    <text evidence="1">Monomer or homodimer.</text>
</comment>
<comment type="subcellular location">
    <subcellularLocation>
        <location evidence="1">Cytoplasm</location>
    </subcellularLocation>
</comment>
<comment type="similarity">
    <text evidence="2">Belongs to the 5-formyltetrahydrofolate cyclo-ligase family.</text>
</comment>
<name>MTHFS_MYCGE</name>
<reference key="1">
    <citation type="journal article" date="1995" name="Science">
        <title>The minimal gene complement of Mycoplasma genitalium.</title>
        <authorList>
            <person name="Fraser C.M."/>
            <person name="Gocayne J.D."/>
            <person name="White O."/>
            <person name="Adams M.D."/>
            <person name="Clayton R.A."/>
            <person name="Fleischmann R.D."/>
            <person name="Bult C.J."/>
            <person name="Kerlavage A.R."/>
            <person name="Sutton G.G."/>
            <person name="Kelley J.M."/>
            <person name="Fritchman J.L."/>
            <person name="Weidman J.F."/>
            <person name="Small K.V."/>
            <person name="Sandusky M."/>
            <person name="Fuhrmann J.L."/>
            <person name="Nguyen D.T."/>
            <person name="Utterback T.R."/>
            <person name="Saudek D.M."/>
            <person name="Phillips C.A."/>
            <person name="Merrick J.M."/>
            <person name="Tomb J.-F."/>
            <person name="Dougherty B.A."/>
            <person name="Bott K.F."/>
            <person name="Hu P.-C."/>
            <person name="Lucier T.S."/>
            <person name="Peterson S.N."/>
            <person name="Smith H.O."/>
            <person name="Hutchison C.A. III"/>
            <person name="Venter J.C."/>
        </authorList>
    </citation>
    <scope>NUCLEOTIDE SEQUENCE [LARGE SCALE GENOMIC DNA]</scope>
    <source>
        <strain>ATCC 33530 / DSM 19775 / NCTC 10195 / G37</strain>
    </source>
</reference>
<sequence length="165" mass="19355">MVDKNSLRKLMLLKRAELNDLEKSHLDQKINQKLMAFLITRPTIKNLALYIPIKNEVAFLDNFLDFLKLNKITSCFPSIVDQFNMKFIDQNNNEINPNDIDCFFIPLLAFNKANHRIGFGKGYYDRYLSLTSKKQLKIGIAYDFQYAEFTNDPWDYQLDLIICNG</sequence>
<accession>P47487</accession>
<keyword id="KW-0067">ATP-binding</keyword>
<keyword id="KW-0963">Cytoplasm</keyword>
<keyword id="KW-0436">Ligase</keyword>
<keyword id="KW-0460">Magnesium</keyword>
<keyword id="KW-0479">Metal-binding</keyword>
<keyword id="KW-0547">Nucleotide-binding</keyword>
<keyword id="KW-1185">Reference proteome</keyword>
<feature type="chain" id="PRO_0000200287" description="5-formyltetrahydrofolate cyclo-ligase">
    <location>
        <begin position="1"/>
        <end position="165"/>
    </location>
</feature>
<feature type="binding site" evidence="1">
    <location>
        <begin position="4"/>
        <end position="8"/>
    </location>
    <ligand>
        <name>ATP</name>
        <dbReference type="ChEBI" id="CHEBI:30616"/>
    </ligand>
</feature>
<feature type="binding site" evidence="1">
    <location>
        <position position="51"/>
    </location>
    <ligand>
        <name>substrate</name>
    </ligand>
</feature>
<feature type="binding site" evidence="1">
    <location>
        <position position="56"/>
    </location>
    <ligand>
        <name>substrate</name>
    </ligand>
</feature>
<feature type="binding site" evidence="1">
    <location>
        <begin position="116"/>
        <end position="124"/>
    </location>
    <ligand>
        <name>ATP</name>
        <dbReference type="ChEBI" id="CHEBI:30616"/>
    </ligand>
</feature>
<feature type="binding site" evidence="1">
    <location>
        <position position="125"/>
    </location>
    <ligand>
        <name>Mg(2+)</name>
        <dbReference type="ChEBI" id="CHEBI:18420"/>
    </ligand>
</feature>
<feature type="binding site" evidence="1">
    <location>
        <position position="126"/>
    </location>
    <ligand>
        <name>ATP</name>
        <dbReference type="ChEBI" id="CHEBI:30616"/>
    </ligand>
</feature>
<feature type="binding site" evidence="1">
    <location>
        <position position="154"/>
    </location>
    <ligand>
        <name>ATP</name>
        <dbReference type="ChEBI" id="CHEBI:30616"/>
    </ligand>
</feature>
<feature type="binding site" evidence="1">
    <location>
        <position position="155"/>
    </location>
    <ligand>
        <name>Mg(2+)</name>
        <dbReference type="ChEBI" id="CHEBI:18420"/>
    </ligand>
</feature>
<protein>
    <recommendedName>
        <fullName>5-formyltetrahydrofolate cyclo-ligase</fullName>
        <ecNumber>6.3.3.2</ecNumber>
    </recommendedName>
    <alternativeName>
        <fullName>5,10-methenyl-tetrahydrofolate synthetase</fullName>
        <shortName>MTHFS</shortName>
        <shortName>Methenyl-THF synthetase</shortName>
    </alternativeName>
</protein>